<evidence type="ECO:0000255" key="1">
    <source>
        <dbReference type="HAMAP-Rule" id="MF_01309"/>
    </source>
</evidence>
<evidence type="ECO:0000256" key="2">
    <source>
        <dbReference type="SAM" id="MobiDB-lite"/>
    </source>
</evidence>
<evidence type="ECO:0000305" key="3"/>
<comment type="function">
    <text evidence="1">Binds the lower part of the 30S subunit head. Binds mRNA in the 70S ribosome, positioning it for translation.</text>
</comment>
<comment type="subunit">
    <text evidence="1">Part of the 30S ribosomal subunit. Forms a tight complex with proteins S10 and S14.</text>
</comment>
<comment type="similarity">
    <text evidence="1">Belongs to the universal ribosomal protein uS3 family.</text>
</comment>
<accession>A1KGI8</accession>
<sequence>MGQKINPHGFRLGITTDWKSRWYADKQYAEYVKEDVAIRRLLSSGLERAGIADVEIERTRDRVRVDIHTARPGIVIGRRGTEADRIRADLEKLTGKQVQLNILEVKNPESQAQLVAQGVAEQLSNRVAFRRAMRKAIQSAMRQPNVKGIRVQCSGRLGGAEMSRSEFYREGRVPLHTLRADIDYGLYEAKTTFGRIGVKVWIYKGDIVGGKRELAAAAPAGADRPRRERPSGTRPRRSGASGTTATGTDAGRAAGGEEAAPDAAAPVEAQSTES</sequence>
<feature type="chain" id="PRO_0000293828" description="Small ribosomal subunit protein uS3">
    <location>
        <begin position="1"/>
        <end position="274"/>
    </location>
</feature>
<feature type="domain" description="KH type-2" evidence="1">
    <location>
        <begin position="38"/>
        <end position="106"/>
    </location>
</feature>
<feature type="region of interest" description="Disordered" evidence="2">
    <location>
        <begin position="215"/>
        <end position="274"/>
    </location>
</feature>
<feature type="compositionally biased region" description="Low complexity" evidence="2">
    <location>
        <begin position="238"/>
        <end position="266"/>
    </location>
</feature>
<reference key="1">
    <citation type="journal article" date="2007" name="Proc. Natl. Acad. Sci. U.S.A.">
        <title>Genome plasticity of BCG and impact on vaccine efficacy.</title>
        <authorList>
            <person name="Brosch R."/>
            <person name="Gordon S.V."/>
            <person name="Garnier T."/>
            <person name="Eiglmeier K."/>
            <person name="Frigui W."/>
            <person name="Valenti P."/>
            <person name="Dos Santos S."/>
            <person name="Duthoy S."/>
            <person name="Lacroix C."/>
            <person name="Garcia-Pelayo C."/>
            <person name="Inwald J.K."/>
            <person name="Golby P."/>
            <person name="Garcia J.N."/>
            <person name="Hewinson R.G."/>
            <person name="Behr M.A."/>
            <person name="Quail M.A."/>
            <person name="Churcher C."/>
            <person name="Barrell B.G."/>
            <person name="Parkhill J."/>
            <person name="Cole S.T."/>
        </authorList>
    </citation>
    <scope>NUCLEOTIDE SEQUENCE [LARGE SCALE GENOMIC DNA]</scope>
    <source>
        <strain>BCG / Pasteur 1173P2</strain>
    </source>
</reference>
<name>RS3_MYCBP</name>
<proteinExistence type="inferred from homology"/>
<gene>
    <name evidence="1" type="primary">rpsC</name>
    <name type="ordered locus">BCG_0757</name>
</gene>
<protein>
    <recommendedName>
        <fullName evidence="1">Small ribosomal subunit protein uS3</fullName>
    </recommendedName>
    <alternativeName>
        <fullName evidence="3">30S ribosomal protein S3</fullName>
    </alternativeName>
</protein>
<keyword id="KW-0687">Ribonucleoprotein</keyword>
<keyword id="KW-0689">Ribosomal protein</keyword>
<keyword id="KW-0694">RNA-binding</keyword>
<keyword id="KW-0699">rRNA-binding</keyword>
<dbReference type="EMBL" id="AM408590">
    <property type="protein sequence ID" value="CAL70743.1"/>
    <property type="molecule type" value="Genomic_DNA"/>
</dbReference>
<dbReference type="RefSeq" id="WP_003403590.1">
    <property type="nucleotide sequence ID" value="NC_008769.1"/>
</dbReference>
<dbReference type="SMR" id="A1KGI8"/>
<dbReference type="GeneID" id="45424672"/>
<dbReference type="KEGG" id="mbb:BCG_0757"/>
<dbReference type="HOGENOM" id="CLU_058591_0_0_11"/>
<dbReference type="Proteomes" id="UP000001472">
    <property type="component" value="Chromosome"/>
</dbReference>
<dbReference type="GO" id="GO:0022627">
    <property type="term" value="C:cytosolic small ribosomal subunit"/>
    <property type="evidence" value="ECO:0007669"/>
    <property type="project" value="TreeGrafter"/>
</dbReference>
<dbReference type="GO" id="GO:0003729">
    <property type="term" value="F:mRNA binding"/>
    <property type="evidence" value="ECO:0007669"/>
    <property type="project" value="UniProtKB-UniRule"/>
</dbReference>
<dbReference type="GO" id="GO:0019843">
    <property type="term" value="F:rRNA binding"/>
    <property type="evidence" value="ECO:0007669"/>
    <property type="project" value="UniProtKB-UniRule"/>
</dbReference>
<dbReference type="GO" id="GO:0003735">
    <property type="term" value="F:structural constituent of ribosome"/>
    <property type="evidence" value="ECO:0007669"/>
    <property type="project" value="InterPro"/>
</dbReference>
<dbReference type="GO" id="GO:0006412">
    <property type="term" value="P:translation"/>
    <property type="evidence" value="ECO:0007669"/>
    <property type="project" value="UniProtKB-UniRule"/>
</dbReference>
<dbReference type="CDD" id="cd02412">
    <property type="entry name" value="KH-II_30S_S3"/>
    <property type="match status" value="1"/>
</dbReference>
<dbReference type="FunFam" id="3.30.1140.32:FF:000002">
    <property type="entry name" value="30S ribosomal protein S3"/>
    <property type="match status" value="1"/>
</dbReference>
<dbReference type="FunFam" id="3.30.300.20:FF:000001">
    <property type="entry name" value="30S ribosomal protein S3"/>
    <property type="match status" value="1"/>
</dbReference>
<dbReference type="Gene3D" id="3.30.300.20">
    <property type="match status" value="1"/>
</dbReference>
<dbReference type="Gene3D" id="3.30.1140.32">
    <property type="entry name" value="Ribosomal protein S3, C-terminal domain"/>
    <property type="match status" value="1"/>
</dbReference>
<dbReference type="HAMAP" id="MF_01309_B">
    <property type="entry name" value="Ribosomal_uS3_B"/>
    <property type="match status" value="1"/>
</dbReference>
<dbReference type="InterPro" id="IPR004087">
    <property type="entry name" value="KH_dom"/>
</dbReference>
<dbReference type="InterPro" id="IPR015946">
    <property type="entry name" value="KH_dom-like_a/b"/>
</dbReference>
<dbReference type="InterPro" id="IPR004044">
    <property type="entry name" value="KH_dom_type_2"/>
</dbReference>
<dbReference type="InterPro" id="IPR009019">
    <property type="entry name" value="KH_sf_prok-type"/>
</dbReference>
<dbReference type="InterPro" id="IPR036419">
    <property type="entry name" value="Ribosomal_S3_C_sf"/>
</dbReference>
<dbReference type="InterPro" id="IPR005704">
    <property type="entry name" value="Ribosomal_uS3_bac-typ"/>
</dbReference>
<dbReference type="InterPro" id="IPR001351">
    <property type="entry name" value="Ribosomal_uS3_C"/>
</dbReference>
<dbReference type="InterPro" id="IPR018280">
    <property type="entry name" value="Ribosomal_uS3_CS"/>
</dbReference>
<dbReference type="NCBIfam" id="TIGR01009">
    <property type="entry name" value="rpsC_bact"/>
    <property type="match status" value="1"/>
</dbReference>
<dbReference type="PANTHER" id="PTHR11760">
    <property type="entry name" value="30S/40S RIBOSOMAL PROTEIN S3"/>
    <property type="match status" value="1"/>
</dbReference>
<dbReference type="PANTHER" id="PTHR11760:SF19">
    <property type="entry name" value="SMALL RIBOSOMAL SUBUNIT PROTEIN US3C"/>
    <property type="match status" value="1"/>
</dbReference>
<dbReference type="Pfam" id="PF07650">
    <property type="entry name" value="KH_2"/>
    <property type="match status" value="1"/>
</dbReference>
<dbReference type="Pfam" id="PF00189">
    <property type="entry name" value="Ribosomal_S3_C"/>
    <property type="match status" value="1"/>
</dbReference>
<dbReference type="SMART" id="SM00322">
    <property type="entry name" value="KH"/>
    <property type="match status" value="1"/>
</dbReference>
<dbReference type="SUPFAM" id="SSF54814">
    <property type="entry name" value="Prokaryotic type KH domain (KH-domain type II)"/>
    <property type="match status" value="1"/>
</dbReference>
<dbReference type="SUPFAM" id="SSF54821">
    <property type="entry name" value="Ribosomal protein S3 C-terminal domain"/>
    <property type="match status" value="1"/>
</dbReference>
<dbReference type="PROSITE" id="PS50823">
    <property type="entry name" value="KH_TYPE_2"/>
    <property type="match status" value="1"/>
</dbReference>
<dbReference type="PROSITE" id="PS00548">
    <property type="entry name" value="RIBOSOMAL_S3"/>
    <property type="match status" value="1"/>
</dbReference>
<organism>
    <name type="scientific">Mycobacterium bovis (strain BCG / Pasteur 1173P2)</name>
    <dbReference type="NCBI Taxonomy" id="410289"/>
    <lineage>
        <taxon>Bacteria</taxon>
        <taxon>Bacillati</taxon>
        <taxon>Actinomycetota</taxon>
        <taxon>Actinomycetes</taxon>
        <taxon>Mycobacteriales</taxon>
        <taxon>Mycobacteriaceae</taxon>
        <taxon>Mycobacterium</taxon>
        <taxon>Mycobacterium tuberculosis complex</taxon>
    </lineage>
</organism>